<sequence length="166" mass="19489">MFPMVTEFMNYGQQTIRAARYIGQGFMITLSHANRLPVTIQYPYEKLITSERFRGRIHFEFDKCIACEVCVRVCPIDLPVVDWKLETDIRKKRLLNYSIDFGICIFCGNCVEYCPTNCLSMTEEYELSTYDRHELNYNQIALGRLPMSIIDDYTIRTILNLPEIKT</sequence>
<feature type="chain" id="PRO_0000250778" description="NAD(P)H-quinone oxidoreductase subunit I, chloroplastic">
    <location>
        <begin position="1"/>
        <end position="166"/>
    </location>
</feature>
<feature type="domain" description="4Fe-4S ferredoxin-type 1" evidence="1">
    <location>
        <begin position="55"/>
        <end position="84"/>
    </location>
</feature>
<feature type="domain" description="4Fe-4S ferredoxin-type 2" evidence="1">
    <location>
        <begin position="95"/>
        <end position="124"/>
    </location>
</feature>
<feature type="binding site" evidence="1">
    <location>
        <position position="64"/>
    </location>
    <ligand>
        <name>[4Fe-4S] cluster</name>
        <dbReference type="ChEBI" id="CHEBI:49883"/>
        <label>1</label>
    </ligand>
</feature>
<feature type="binding site" evidence="1">
    <location>
        <position position="67"/>
    </location>
    <ligand>
        <name>[4Fe-4S] cluster</name>
        <dbReference type="ChEBI" id="CHEBI:49883"/>
        <label>1</label>
    </ligand>
</feature>
<feature type="binding site" evidence="1">
    <location>
        <position position="70"/>
    </location>
    <ligand>
        <name>[4Fe-4S] cluster</name>
        <dbReference type="ChEBI" id="CHEBI:49883"/>
        <label>1</label>
    </ligand>
</feature>
<feature type="binding site" evidence="1">
    <location>
        <position position="74"/>
    </location>
    <ligand>
        <name>[4Fe-4S] cluster</name>
        <dbReference type="ChEBI" id="CHEBI:49883"/>
        <label>2</label>
    </ligand>
</feature>
<feature type="binding site" evidence="1">
    <location>
        <position position="104"/>
    </location>
    <ligand>
        <name>[4Fe-4S] cluster</name>
        <dbReference type="ChEBI" id="CHEBI:49883"/>
        <label>2</label>
    </ligand>
</feature>
<feature type="binding site" evidence="1">
    <location>
        <position position="107"/>
    </location>
    <ligand>
        <name>[4Fe-4S] cluster</name>
        <dbReference type="ChEBI" id="CHEBI:49883"/>
        <label>2</label>
    </ligand>
</feature>
<feature type="binding site" evidence="1">
    <location>
        <position position="110"/>
    </location>
    <ligand>
        <name>[4Fe-4S] cluster</name>
        <dbReference type="ChEBI" id="CHEBI:49883"/>
        <label>2</label>
    </ligand>
</feature>
<feature type="binding site" evidence="1">
    <location>
        <position position="114"/>
    </location>
    <ligand>
        <name>[4Fe-4S] cluster</name>
        <dbReference type="ChEBI" id="CHEBI:49883"/>
        <label>1</label>
    </ligand>
</feature>
<evidence type="ECO:0000255" key="1">
    <source>
        <dbReference type="HAMAP-Rule" id="MF_01351"/>
    </source>
</evidence>
<reference key="1">
    <citation type="submission" date="2003-01" db="EMBL/GenBank/DDBJ databases">
        <title>Chloroplast DNA phylogeny of tribe Heliantheae (Asteraceae).</title>
        <authorList>
            <person name="Panero J.L."/>
            <person name="Baldwin B.G."/>
            <person name="Schilling E.E."/>
            <person name="Clevinger J.A."/>
        </authorList>
    </citation>
    <scope>NUCLEOTIDE SEQUENCE [GENOMIC DNA]</scope>
</reference>
<comment type="function">
    <text evidence="1">NDH shuttles electrons from NAD(P)H:plastoquinone, via FMN and iron-sulfur (Fe-S) centers, to quinones in the photosynthetic chain and possibly in a chloroplast respiratory chain. The immediate electron acceptor for the enzyme in this species is believed to be plastoquinone. Couples the redox reaction to proton translocation, and thus conserves the redox energy in a proton gradient.</text>
</comment>
<comment type="catalytic activity">
    <reaction evidence="1">
        <text>a plastoquinone + NADH + (n+1) H(+)(in) = a plastoquinol + NAD(+) + n H(+)(out)</text>
        <dbReference type="Rhea" id="RHEA:42608"/>
        <dbReference type="Rhea" id="RHEA-COMP:9561"/>
        <dbReference type="Rhea" id="RHEA-COMP:9562"/>
        <dbReference type="ChEBI" id="CHEBI:15378"/>
        <dbReference type="ChEBI" id="CHEBI:17757"/>
        <dbReference type="ChEBI" id="CHEBI:57540"/>
        <dbReference type="ChEBI" id="CHEBI:57945"/>
        <dbReference type="ChEBI" id="CHEBI:62192"/>
    </reaction>
</comment>
<comment type="catalytic activity">
    <reaction evidence="1">
        <text>a plastoquinone + NADPH + (n+1) H(+)(in) = a plastoquinol + NADP(+) + n H(+)(out)</text>
        <dbReference type="Rhea" id="RHEA:42612"/>
        <dbReference type="Rhea" id="RHEA-COMP:9561"/>
        <dbReference type="Rhea" id="RHEA-COMP:9562"/>
        <dbReference type="ChEBI" id="CHEBI:15378"/>
        <dbReference type="ChEBI" id="CHEBI:17757"/>
        <dbReference type="ChEBI" id="CHEBI:57783"/>
        <dbReference type="ChEBI" id="CHEBI:58349"/>
        <dbReference type="ChEBI" id="CHEBI:62192"/>
    </reaction>
</comment>
<comment type="cofactor">
    <cofactor evidence="1">
        <name>[4Fe-4S] cluster</name>
        <dbReference type="ChEBI" id="CHEBI:49883"/>
    </cofactor>
    <text evidence="1">Binds 2 [4Fe-4S] clusters per subunit.</text>
</comment>
<comment type="subunit">
    <text evidence="1">NDH is composed of at least 16 different subunits, 5 of which are encoded in the nucleus.</text>
</comment>
<comment type="subcellular location">
    <subcellularLocation>
        <location evidence="1">Plastid</location>
        <location evidence="1">Chloroplast thylakoid membrane</location>
        <topology evidence="1">Peripheral membrane protein</topology>
    </subcellularLocation>
</comment>
<comment type="similarity">
    <text evidence="1">Belongs to the complex I 23 kDa subunit family.</text>
</comment>
<organism>
    <name type="scientific">Dimerostemma vestitum</name>
    <dbReference type="NCBI Taxonomy" id="183306"/>
    <lineage>
        <taxon>Eukaryota</taxon>
        <taxon>Viridiplantae</taxon>
        <taxon>Streptophyta</taxon>
        <taxon>Embryophyta</taxon>
        <taxon>Tracheophyta</taxon>
        <taxon>Spermatophyta</taxon>
        <taxon>Magnoliopsida</taxon>
        <taxon>eudicotyledons</taxon>
        <taxon>Gunneridae</taxon>
        <taxon>Pentapetalae</taxon>
        <taxon>asterids</taxon>
        <taxon>campanulids</taxon>
        <taxon>Asterales</taxon>
        <taxon>Asteraceae</taxon>
        <taxon>Asteroideae</taxon>
        <taxon>Heliantheae alliance</taxon>
        <taxon>Heliantheae</taxon>
        <taxon>Dimerostemma</taxon>
    </lineage>
</organism>
<accession>Q8HVT7</accession>
<proteinExistence type="inferred from homology"/>
<gene>
    <name evidence="1" type="primary">ndhI</name>
</gene>
<dbReference type="EC" id="7.1.1.-" evidence="1"/>
<dbReference type="EMBL" id="AF383775">
    <property type="protein sequence ID" value="AAN61717.1"/>
    <property type="molecule type" value="Genomic_DNA"/>
</dbReference>
<dbReference type="SMR" id="Q8HVT7"/>
<dbReference type="GO" id="GO:0009535">
    <property type="term" value="C:chloroplast thylakoid membrane"/>
    <property type="evidence" value="ECO:0007669"/>
    <property type="project" value="UniProtKB-SubCell"/>
</dbReference>
<dbReference type="GO" id="GO:0051539">
    <property type="term" value="F:4 iron, 4 sulfur cluster binding"/>
    <property type="evidence" value="ECO:0007669"/>
    <property type="project" value="UniProtKB-KW"/>
</dbReference>
<dbReference type="GO" id="GO:0005506">
    <property type="term" value="F:iron ion binding"/>
    <property type="evidence" value="ECO:0007669"/>
    <property type="project" value="UniProtKB-UniRule"/>
</dbReference>
<dbReference type="GO" id="GO:0008137">
    <property type="term" value="F:NADH dehydrogenase (ubiquinone) activity"/>
    <property type="evidence" value="ECO:0007669"/>
    <property type="project" value="InterPro"/>
</dbReference>
<dbReference type="GO" id="GO:0048038">
    <property type="term" value="F:quinone binding"/>
    <property type="evidence" value="ECO:0007669"/>
    <property type="project" value="UniProtKB-KW"/>
</dbReference>
<dbReference type="GO" id="GO:0019684">
    <property type="term" value="P:photosynthesis, light reaction"/>
    <property type="evidence" value="ECO:0007669"/>
    <property type="project" value="UniProtKB-UniRule"/>
</dbReference>
<dbReference type="FunFam" id="3.30.70.3270:FF:000006">
    <property type="entry name" value="NAD(P)H-quinone oxidoreductase subunit I, chloroplastic"/>
    <property type="match status" value="1"/>
</dbReference>
<dbReference type="Gene3D" id="3.30.70.3270">
    <property type="match status" value="1"/>
</dbReference>
<dbReference type="HAMAP" id="MF_01351">
    <property type="entry name" value="NDH1_NuoI"/>
    <property type="match status" value="1"/>
</dbReference>
<dbReference type="InterPro" id="IPR017896">
    <property type="entry name" value="4Fe4S_Fe-S-bd"/>
</dbReference>
<dbReference type="InterPro" id="IPR017900">
    <property type="entry name" value="4Fe4S_Fe_S_CS"/>
</dbReference>
<dbReference type="InterPro" id="IPR010226">
    <property type="entry name" value="NADH_quinone_OxRdtase_chainI"/>
</dbReference>
<dbReference type="InterPro" id="IPR004497">
    <property type="entry name" value="NDHI"/>
</dbReference>
<dbReference type="NCBIfam" id="TIGR00403">
    <property type="entry name" value="ndhI"/>
    <property type="match status" value="1"/>
</dbReference>
<dbReference type="NCBIfam" id="TIGR01971">
    <property type="entry name" value="NuoI"/>
    <property type="match status" value="1"/>
</dbReference>
<dbReference type="NCBIfam" id="NF004537">
    <property type="entry name" value="PRK05888.1-3"/>
    <property type="match status" value="1"/>
</dbReference>
<dbReference type="PANTHER" id="PTHR47275">
    <property type="entry name" value="NAD(P)H-QUINONE OXIDOREDUCTASE SUBUNIT I, CHLOROPLASTIC"/>
    <property type="match status" value="1"/>
</dbReference>
<dbReference type="PANTHER" id="PTHR47275:SF1">
    <property type="entry name" value="NAD(P)H-QUINONE OXIDOREDUCTASE SUBUNIT I, CHLOROPLASTIC"/>
    <property type="match status" value="1"/>
</dbReference>
<dbReference type="Pfam" id="PF00037">
    <property type="entry name" value="Fer4"/>
    <property type="match status" value="2"/>
</dbReference>
<dbReference type="SUPFAM" id="SSF54862">
    <property type="entry name" value="4Fe-4S ferredoxins"/>
    <property type="match status" value="1"/>
</dbReference>
<dbReference type="PROSITE" id="PS00198">
    <property type="entry name" value="4FE4S_FER_1"/>
    <property type="match status" value="2"/>
</dbReference>
<dbReference type="PROSITE" id="PS51379">
    <property type="entry name" value="4FE4S_FER_2"/>
    <property type="match status" value="2"/>
</dbReference>
<protein>
    <recommendedName>
        <fullName evidence="1">NAD(P)H-quinone oxidoreductase subunit I, chloroplastic</fullName>
        <ecNumber evidence="1">7.1.1.-</ecNumber>
    </recommendedName>
    <alternativeName>
        <fullName evidence="1">NAD(P)H dehydrogenase subunit I</fullName>
        <shortName evidence="1">NDH subunit I</shortName>
    </alternativeName>
    <alternativeName>
        <fullName evidence="1">NADH-plastoquinone oxidoreductase subunit I</fullName>
    </alternativeName>
</protein>
<name>NDHI_DIMVE</name>
<keyword id="KW-0004">4Fe-4S</keyword>
<keyword id="KW-0150">Chloroplast</keyword>
<keyword id="KW-0408">Iron</keyword>
<keyword id="KW-0411">Iron-sulfur</keyword>
<keyword id="KW-0472">Membrane</keyword>
<keyword id="KW-0479">Metal-binding</keyword>
<keyword id="KW-0520">NAD</keyword>
<keyword id="KW-0521">NADP</keyword>
<keyword id="KW-0934">Plastid</keyword>
<keyword id="KW-0618">Plastoquinone</keyword>
<keyword id="KW-0874">Quinone</keyword>
<keyword id="KW-0677">Repeat</keyword>
<keyword id="KW-0793">Thylakoid</keyword>
<keyword id="KW-1278">Translocase</keyword>
<geneLocation type="chloroplast"/>